<evidence type="ECO:0000250" key="1"/>
<evidence type="ECO:0000255" key="2">
    <source>
        <dbReference type="PROSITE-ProRule" id="PRU00541"/>
    </source>
</evidence>
<evidence type="ECO:0000255" key="3">
    <source>
        <dbReference type="PROSITE-ProRule" id="PRU00542"/>
    </source>
</evidence>
<evidence type="ECO:0000256" key="4">
    <source>
        <dbReference type="SAM" id="MobiDB-lite"/>
    </source>
</evidence>
<evidence type="ECO:0000305" key="5"/>
<accession>Q0CZN5</accession>
<reference key="1">
    <citation type="submission" date="2005-09" db="EMBL/GenBank/DDBJ databases">
        <title>Annotation of the Aspergillus terreus NIH2624 genome.</title>
        <authorList>
            <person name="Birren B.W."/>
            <person name="Lander E.S."/>
            <person name="Galagan J.E."/>
            <person name="Nusbaum C."/>
            <person name="Devon K."/>
            <person name="Henn M."/>
            <person name="Ma L.-J."/>
            <person name="Jaffe D.B."/>
            <person name="Butler J."/>
            <person name="Alvarez P."/>
            <person name="Gnerre S."/>
            <person name="Grabherr M."/>
            <person name="Kleber M."/>
            <person name="Mauceli E.W."/>
            <person name="Brockman W."/>
            <person name="Rounsley S."/>
            <person name="Young S.K."/>
            <person name="LaButti K."/>
            <person name="Pushparaj V."/>
            <person name="DeCaprio D."/>
            <person name="Crawford M."/>
            <person name="Koehrsen M."/>
            <person name="Engels R."/>
            <person name="Montgomery P."/>
            <person name="Pearson M."/>
            <person name="Howarth C."/>
            <person name="Larson L."/>
            <person name="Luoma S."/>
            <person name="White J."/>
            <person name="Alvarado L."/>
            <person name="Kodira C.D."/>
            <person name="Zeng Q."/>
            <person name="Oleary S."/>
            <person name="Yandava C."/>
            <person name="Denning D.W."/>
            <person name="Nierman W.C."/>
            <person name="Milne T."/>
            <person name="Madden K."/>
        </authorList>
    </citation>
    <scope>NUCLEOTIDE SEQUENCE [LARGE SCALE GENOMIC DNA]</scope>
    <source>
        <strain>NIH 2624 / FGSC A1156</strain>
    </source>
</reference>
<dbReference type="EC" id="3.6.4.13"/>
<dbReference type="EMBL" id="CH476594">
    <property type="protein sequence ID" value="EAU39495.1"/>
    <property type="molecule type" value="Genomic_DNA"/>
</dbReference>
<dbReference type="RefSeq" id="XP_001210935.1">
    <property type="nucleotide sequence ID" value="XM_001210935.1"/>
</dbReference>
<dbReference type="SMR" id="Q0CZN5"/>
<dbReference type="STRING" id="341663.Q0CZN5"/>
<dbReference type="EnsemblFungi" id="EAU39495">
    <property type="protein sequence ID" value="EAU39495"/>
    <property type="gene ID" value="ATEG_00849"/>
</dbReference>
<dbReference type="GeneID" id="4355610"/>
<dbReference type="VEuPathDB" id="FungiDB:ATEG_00849"/>
<dbReference type="eggNOG" id="KOG0338">
    <property type="taxonomic scope" value="Eukaryota"/>
</dbReference>
<dbReference type="HOGENOM" id="CLU_003041_3_1_1"/>
<dbReference type="OMA" id="MIDPPKQ"/>
<dbReference type="OrthoDB" id="10259843at2759"/>
<dbReference type="Proteomes" id="UP000007963">
    <property type="component" value="Unassembled WGS sequence"/>
</dbReference>
<dbReference type="GO" id="GO:0005829">
    <property type="term" value="C:cytosol"/>
    <property type="evidence" value="ECO:0007669"/>
    <property type="project" value="TreeGrafter"/>
</dbReference>
<dbReference type="GO" id="GO:0005730">
    <property type="term" value="C:nucleolus"/>
    <property type="evidence" value="ECO:0007669"/>
    <property type="project" value="UniProtKB-SubCell"/>
</dbReference>
<dbReference type="GO" id="GO:0030687">
    <property type="term" value="C:preribosome, large subunit precursor"/>
    <property type="evidence" value="ECO:0007669"/>
    <property type="project" value="EnsemblFungi"/>
</dbReference>
<dbReference type="GO" id="GO:0005524">
    <property type="term" value="F:ATP binding"/>
    <property type="evidence" value="ECO:0007669"/>
    <property type="project" value="UniProtKB-KW"/>
</dbReference>
<dbReference type="GO" id="GO:0016887">
    <property type="term" value="F:ATP hydrolysis activity"/>
    <property type="evidence" value="ECO:0007669"/>
    <property type="project" value="RHEA"/>
</dbReference>
<dbReference type="GO" id="GO:0003723">
    <property type="term" value="F:RNA binding"/>
    <property type="evidence" value="ECO:0007669"/>
    <property type="project" value="UniProtKB-KW"/>
</dbReference>
<dbReference type="GO" id="GO:0003724">
    <property type="term" value="F:RNA helicase activity"/>
    <property type="evidence" value="ECO:0007669"/>
    <property type="project" value="UniProtKB-EC"/>
</dbReference>
<dbReference type="GO" id="GO:0000027">
    <property type="term" value="P:ribosomal large subunit assembly"/>
    <property type="evidence" value="ECO:0007669"/>
    <property type="project" value="EnsemblFungi"/>
</dbReference>
<dbReference type="GO" id="GO:0006364">
    <property type="term" value="P:rRNA processing"/>
    <property type="evidence" value="ECO:0007669"/>
    <property type="project" value="EnsemblFungi"/>
</dbReference>
<dbReference type="CDD" id="cd17947">
    <property type="entry name" value="DEADc_DDX27"/>
    <property type="match status" value="1"/>
</dbReference>
<dbReference type="CDD" id="cd18787">
    <property type="entry name" value="SF2_C_DEAD"/>
    <property type="match status" value="1"/>
</dbReference>
<dbReference type="Gene3D" id="3.40.50.300">
    <property type="entry name" value="P-loop containing nucleotide triphosphate hydrolases"/>
    <property type="match status" value="2"/>
</dbReference>
<dbReference type="InterPro" id="IPR011545">
    <property type="entry name" value="DEAD/DEAH_box_helicase_dom"/>
</dbReference>
<dbReference type="InterPro" id="IPR050079">
    <property type="entry name" value="DEAD_box_RNA_helicase"/>
</dbReference>
<dbReference type="InterPro" id="IPR014001">
    <property type="entry name" value="Helicase_ATP-bd"/>
</dbReference>
<dbReference type="InterPro" id="IPR001650">
    <property type="entry name" value="Helicase_C-like"/>
</dbReference>
<dbReference type="InterPro" id="IPR027417">
    <property type="entry name" value="P-loop_NTPase"/>
</dbReference>
<dbReference type="InterPro" id="IPR000629">
    <property type="entry name" value="RNA-helicase_DEAD-box_CS"/>
</dbReference>
<dbReference type="InterPro" id="IPR014014">
    <property type="entry name" value="RNA_helicase_DEAD_Q_motif"/>
</dbReference>
<dbReference type="PANTHER" id="PTHR47959:SF1">
    <property type="entry name" value="ATP-DEPENDENT RNA HELICASE DBPA"/>
    <property type="match status" value="1"/>
</dbReference>
<dbReference type="PANTHER" id="PTHR47959">
    <property type="entry name" value="ATP-DEPENDENT RNA HELICASE RHLE-RELATED"/>
    <property type="match status" value="1"/>
</dbReference>
<dbReference type="Pfam" id="PF00270">
    <property type="entry name" value="DEAD"/>
    <property type="match status" value="1"/>
</dbReference>
<dbReference type="Pfam" id="PF00271">
    <property type="entry name" value="Helicase_C"/>
    <property type="match status" value="1"/>
</dbReference>
<dbReference type="SMART" id="SM00487">
    <property type="entry name" value="DEXDc"/>
    <property type="match status" value="1"/>
</dbReference>
<dbReference type="SMART" id="SM00490">
    <property type="entry name" value="HELICc"/>
    <property type="match status" value="1"/>
</dbReference>
<dbReference type="SUPFAM" id="SSF52540">
    <property type="entry name" value="P-loop containing nucleoside triphosphate hydrolases"/>
    <property type="match status" value="1"/>
</dbReference>
<dbReference type="PROSITE" id="PS00039">
    <property type="entry name" value="DEAD_ATP_HELICASE"/>
    <property type="match status" value="1"/>
</dbReference>
<dbReference type="PROSITE" id="PS51192">
    <property type="entry name" value="HELICASE_ATP_BIND_1"/>
    <property type="match status" value="1"/>
</dbReference>
<dbReference type="PROSITE" id="PS51194">
    <property type="entry name" value="HELICASE_CTER"/>
    <property type="match status" value="1"/>
</dbReference>
<dbReference type="PROSITE" id="PS51195">
    <property type="entry name" value="Q_MOTIF"/>
    <property type="match status" value="1"/>
</dbReference>
<organism>
    <name type="scientific">Aspergillus terreus (strain NIH 2624 / FGSC A1156)</name>
    <dbReference type="NCBI Taxonomy" id="341663"/>
    <lineage>
        <taxon>Eukaryota</taxon>
        <taxon>Fungi</taxon>
        <taxon>Dikarya</taxon>
        <taxon>Ascomycota</taxon>
        <taxon>Pezizomycotina</taxon>
        <taxon>Eurotiomycetes</taxon>
        <taxon>Eurotiomycetidae</taxon>
        <taxon>Eurotiales</taxon>
        <taxon>Aspergillaceae</taxon>
        <taxon>Aspergillus</taxon>
        <taxon>Aspergillus subgen. Circumdati</taxon>
    </lineage>
</organism>
<proteinExistence type="inferred from homology"/>
<gene>
    <name type="primary">drs1</name>
    <name type="ORF">ATEG_00849</name>
</gene>
<comment type="function">
    <text evidence="1">ATP-binding RNA helicase involved in ribosome assembly.</text>
</comment>
<comment type="catalytic activity">
    <reaction>
        <text>ATP + H2O = ADP + phosphate + H(+)</text>
        <dbReference type="Rhea" id="RHEA:13065"/>
        <dbReference type="ChEBI" id="CHEBI:15377"/>
        <dbReference type="ChEBI" id="CHEBI:15378"/>
        <dbReference type="ChEBI" id="CHEBI:30616"/>
        <dbReference type="ChEBI" id="CHEBI:43474"/>
        <dbReference type="ChEBI" id="CHEBI:456216"/>
        <dbReference type="EC" id="3.6.4.13"/>
    </reaction>
</comment>
<comment type="subunit">
    <text evidence="1">Associates with pre-ribosomal particles.</text>
</comment>
<comment type="subcellular location">
    <subcellularLocation>
        <location evidence="1">Nucleus</location>
        <location evidence="1">Nucleolus</location>
    </subcellularLocation>
</comment>
<comment type="domain">
    <text>The Q motif is unique to and characteristic of the DEAD box family of RNA helicases and controls ATP binding and hydrolysis.</text>
</comment>
<comment type="similarity">
    <text evidence="5">Belongs to the DEAD box helicase family. DDX27/DRS1 subfamily.</text>
</comment>
<feature type="chain" id="PRO_0000282491" description="ATP-dependent RNA helicase drs1">
    <location>
        <begin position="1"/>
        <end position="821"/>
    </location>
</feature>
<feature type="domain" description="Helicase ATP-binding" evidence="2">
    <location>
        <begin position="335"/>
        <end position="509"/>
    </location>
</feature>
<feature type="domain" description="Helicase C-terminal" evidence="3">
    <location>
        <begin position="536"/>
        <end position="683"/>
    </location>
</feature>
<feature type="region of interest" description="Disordered" evidence="4">
    <location>
        <begin position="1"/>
        <end position="304"/>
    </location>
</feature>
<feature type="region of interest" description="Disordered" evidence="4">
    <location>
        <begin position="754"/>
        <end position="821"/>
    </location>
</feature>
<feature type="short sequence motif" description="Q motif">
    <location>
        <begin position="304"/>
        <end position="332"/>
    </location>
</feature>
<feature type="short sequence motif" description="DEAD box">
    <location>
        <begin position="457"/>
        <end position="460"/>
    </location>
</feature>
<feature type="compositionally biased region" description="Acidic residues" evidence="4">
    <location>
        <begin position="27"/>
        <end position="37"/>
    </location>
</feature>
<feature type="compositionally biased region" description="Basic residues" evidence="4">
    <location>
        <begin position="59"/>
        <end position="76"/>
    </location>
</feature>
<feature type="compositionally biased region" description="Acidic residues" evidence="4">
    <location>
        <begin position="82"/>
        <end position="109"/>
    </location>
</feature>
<feature type="compositionally biased region" description="Basic and acidic residues" evidence="4">
    <location>
        <begin position="134"/>
        <end position="162"/>
    </location>
</feature>
<feature type="compositionally biased region" description="Acidic residues" evidence="4">
    <location>
        <begin position="172"/>
        <end position="188"/>
    </location>
</feature>
<feature type="compositionally biased region" description="Acidic residues" evidence="4">
    <location>
        <begin position="212"/>
        <end position="249"/>
    </location>
</feature>
<feature type="compositionally biased region" description="Acidic residues" evidence="4">
    <location>
        <begin position="264"/>
        <end position="280"/>
    </location>
</feature>
<feature type="compositionally biased region" description="Basic and acidic residues" evidence="4">
    <location>
        <begin position="281"/>
        <end position="299"/>
    </location>
</feature>
<feature type="compositionally biased region" description="Basic and acidic residues" evidence="4">
    <location>
        <begin position="765"/>
        <end position="805"/>
    </location>
</feature>
<feature type="compositionally biased region" description="Basic residues" evidence="4">
    <location>
        <begin position="807"/>
        <end position="821"/>
    </location>
</feature>
<feature type="binding site" evidence="2">
    <location>
        <begin position="348"/>
        <end position="355"/>
    </location>
    <ligand>
        <name>ATP</name>
        <dbReference type="ChEBI" id="CHEBI:30616"/>
    </ligand>
</feature>
<protein>
    <recommendedName>
        <fullName>ATP-dependent RNA helicase drs1</fullName>
        <ecNumber>3.6.4.13</ecNumber>
    </recommendedName>
</protein>
<keyword id="KW-0067">ATP-binding</keyword>
<keyword id="KW-0347">Helicase</keyword>
<keyword id="KW-0378">Hydrolase</keyword>
<keyword id="KW-0547">Nucleotide-binding</keyword>
<keyword id="KW-0539">Nucleus</keyword>
<keyword id="KW-1185">Reference proteome</keyword>
<keyword id="KW-0690">Ribosome biogenesis</keyword>
<keyword id="KW-0694">RNA-binding</keyword>
<name>DRS1_ASPTN</name>
<sequence length="821" mass="90665">MAPKQKDDDFVLTLSDDENDAFNNFDVDGDDGDDGDELASSGTKKRKRDTAETTQNTSKKQKQQKPVKNGLKKNKKGQAETPAEEEQEEPQEEEDAGEDDGALDSDFEFDVGGVANTVVEGFDGWGMGNAEDEGAAKKGDKKAVDIDDIISRRQAKKEAAEAKKKKKQSEAQDNESWDGVAEDEDAESDGGMSVDFQDDELLAADGFGMGADGEDESDNEEAQDESGSDNDSDDDEEKDSEDDDDEAASDNDSVATPVGHPEDEASDNDSDAESEIDAEEQEKRKAFFAPEEEKTKEQADGAQRSFQEFNLSRPILRGLAAVNFTNPTPIQRKTIPVALLGKDIVGSAVTGSGKTAAFVVPILERLLFRPRKVPTSRVAILMPTRELAVQCYNVATKLATYTDITFCQLVGGFSLREQENILKKRPDVIIATPGRFIDHMRNSASFTVDTLEILVLDEADRMLEDGFADELNEILTTIPKSRQTMLFSATMTDTVDKLIRVGLNRPVRLMVDSKKNTSLTLVQEFVRLRPGREDKRLGYLLYLCKEIYTGRVIVFFRQKREAHRVRIVFGLLGLKAAELHGSMSQEQRIKSVENFRDGKVAFLLATDLASRGLDIKGVETVINYEAPQSHEIYLHRVGRTARAGRSGRACTIAAEPDRKVVKAAVKASKAQGAKVASRVVDPAVADQWAKKAADLEEEINEVLEEEKTEKQLAQAEMQVTKGENLIKHEAEIMSRPKRTWFESEKDKRAARKLGAAQLNGPDAGLSKKEKVKLSNKDKKRLDDARQRLEGKAGWKKGKAEREAPKPAKGKGKGKDKKKGKN</sequence>